<sequence length="857" mass="96108">MNAFEKMTHQLRETLEQALSLALHAKNPEVDLPHMAWALLINSTSILNQALNKMGVDKSALELEAKSLVDRLPQSSSLTKENIKISKRLADSLTQAEALGVKGGDKFIAVDTWLLANLKEEPLKSLFSKYLDVNELKKNLESIRGGAKIESATDDENLESLAKYGIDLTQKALENKLDPVIGRDEEISRMMQILIRKTKNNPILLGEPGVGKTAVVEGLAQRIIAKEVPLSLQNKRVVALDMSALIAGAKYRGEFEDRLKKVVEEVKKAGNVILFIDEIHTIVGAGASEGSMDAANILKPALARGELHTIGATTLKEYRKYFEKDAALQRRFQPIFLNEPTINEALQILRGIKERLEAHHNVTIYDSALVAAAKLSSRYITDRYLPDKAIDLIDEAAAELKMQIESEPTELSLIKRQIQRLEVEKEALLMEKESTHSEARIKEIQAELENAKERQRTLLAQFENEKAVFNEIASIKAKADELRRESELAKRSGDYNKAAEIDYGKIPELENREKELNTQWNRMQESGTLLKNAVSEESIAGIVSRWTQIPVKKMLQGEKEKVLGVEEELRKDVVGQDEALHAIARAIKRNKAGLSENNRPIGSFLFLGPTGVGKTQSAKTLAKFLFDSDKNLVRIDMSEYMEKHAASRLVGAPPGYVGYEEGGQLTEAIRRKPYSVVLFDEIEKAHPDVFNILLQVLDDGRLTDNKGVTVDFRNTIIILTSNIASDKIMENSDKERRESAVKAELKRYFKPEFLNRLDDIIIFNPLGLAQIVEIVEIMFEGIREKLKERQITLELTQSAKEQIAEVGFDPVYGARPLKRALYEEVEDRLAELILEDKISEGSHVVFDAQGGKIIARI</sequence>
<proteinExistence type="inferred from homology"/>
<organism>
    <name type="scientific">Wolinella succinogenes (strain ATCC 29543 / DSM 1740 / CCUG 13145 / JCM 31913 / LMG 7466 / NCTC 11488 / FDC 602W)</name>
    <name type="common">Vibrio succinogenes</name>
    <dbReference type="NCBI Taxonomy" id="273121"/>
    <lineage>
        <taxon>Bacteria</taxon>
        <taxon>Pseudomonadati</taxon>
        <taxon>Campylobacterota</taxon>
        <taxon>Epsilonproteobacteria</taxon>
        <taxon>Campylobacterales</taxon>
        <taxon>Helicobacteraceae</taxon>
        <taxon>Wolinella</taxon>
    </lineage>
</organism>
<keyword id="KW-0067">ATP-binding</keyword>
<keyword id="KW-0143">Chaperone</keyword>
<keyword id="KW-0175">Coiled coil</keyword>
<keyword id="KW-0963">Cytoplasm</keyword>
<keyword id="KW-0547">Nucleotide-binding</keyword>
<keyword id="KW-1185">Reference proteome</keyword>
<keyword id="KW-0677">Repeat</keyword>
<keyword id="KW-0346">Stress response</keyword>
<dbReference type="EMBL" id="BX571658">
    <property type="protein sequence ID" value="CAE09740.1"/>
    <property type="molecule type" value="Genomic_DNA"/>
</dbReference>
<dbReference type="RefSeq" id="WP_011138540.1">
    <property type="nucleotide sequence ID" value="NC_005090.1"/>
</dbReference>
<dbReference type="SMR" id="Q7M9X4"/>
<dbReference type="STRING" id="273121.WS0609"/>
<dbReference type="KEGG" id="wsu:WS0609"/>
<dbReference type="eggNOG" id="COG0542">
    <property type="taxonomic scope" value="Bacteria"/>
</dbReference>
<dbReference type="HOGENOM" id="CLU_005070_4_0_7"/>
<dbReference type="Proteomes" id="UP000000422">
    <property type="component" value="Chromosome"/>
</dbReference>
<dbReference type="GO" id="GO:0005737">
    <property type="term" value="C:cytoplasm"/>
    <property type="evidence" value="ECO:0007669"/>
    <property type="project" value="UniProtKB-SubCell"/>
</dbReference>
<dbReference type="GO" id="GO:0005524">
    <property type="term" value="F:ATP binding"/>
    <property type="evidence" value="ECO:0007669"/>
    <property type="project" value="UniProtKB-KW"/>
</dbReference>
<dbReference type="GO" id="GO:0016887">
    <property type="term" value="F:ATP hydrolysis activity"/>
    <property type="evidence" value="ECO:0007669"/>
    <property type="project" value="InterPro"/>
</dbReference>
<dbReference type="GO" id="GO:0034605">
    <property type="term" value="P:cellular response to heat"/>
    <property type="evidence" value="ECO:0007669"/>
    <property type="project" value="TreeGrafter"/>
</dbReference>
<dbReference type="CDD" id="cd00009">
    <property type="entry name" value="AAA"/>
    <property type="match status" value="1"/>
</dbReference>
<dbReference type="CDD" id="cd19499">
    <property type="entry name" value="RecA-like_ClpB_Hsp104-like"/>
    <property type="match status" value="1"/>
</dbReference>
<dbReference type="FunFam" id="3.40.50.300:FF:000120">
    <property type="entry name" value="ATP-dependent chaperone ClpB"/>
    <property type="match status" value="1"/>
</dbReference>
<dbReference type="FunFam" id="3.40.50.300:FF:000025">
    <property type="entry name" value="ATP-dependent Clp protease subunit"/>
    <property type="match status" value="1"/>
</dbReference>
<dbReference type="FunFam" id="3.40.50.300:FF:000010">
    <property type="entry name" value="Chaperone clpB 1, putative"/>
    <property type="match status" value="1"/>
</dbReference>
<dbReference type="Gene3D" id="1.10.8.60">
    <property type="match status" value="1"/>
</dbReference>
<dbReference type="Gene3D" id="1.10.1780.10">
    <property type="entry name" value="Clp, N-terminal domain"/>
    <property type="match status" value="1"/>
</dbReference>
<dbReference type="Gene3D" id="3.40.50.300">
    <property type="entry name" value="P-loop containing nucleotide triphosphate hydrolases"/>
    <property type="match status" value="3"/>
</dbReference>
<dbReference type="InterPro" id="IPR003593">
    <property type="entry name" value="AAA+_ATPase"/>
</dbReference>
<dbReference type="InterPro" id="IPR003959">
    <property type="entry name" value="ATPase_AAA_core"/>
</dbReference>
<dbReference type="InterPro" id="IPR019489">
    <property type="entry name" value="Clp_ATPase_C"/>
</dbReference>
<dbReference type="InterPro" id="IPR036628">
    <property type="entry name" value="Clp_N_dom_sf"/>
</dbReference>
<dbReference type="InterPro" id="IPR004176">
    <property type="entry name" value="Clp_R_dom"/>
</dbReference>
<dbReference type="InterPro" id="IPR001270">
    <property type="entry name" value="ClpA/B"/>
</dbReference>
<dbReference type="InterPro" id="IPR018368">
    <property type="entry name" value="ClpA/B_CS1"/>
</dbReference>
<dbReference type="InterPro" id="IPR028299">
    <property type="entry name" value="ClpA/B_CS2"/>
</dbReference>
<dbReference type="InterPro" id="IPR041546">
    <property type="entry name" value="ClpA/ClpB_AAA_lid"/>
</dbReference>
<dbReference type="InterPro" id="IPR050130">
    <property type="entry name" value="ClpA_ClpB"/>
</dbReference>
<dbReference type="InterPro" id="IPR027417">
    <property type="entry name" value="P-loop_NTPase"/>
</dbReference>
<dbReference type="PANTHER" id="PTHR11638">
    <property type="entry name" value="ATP-DEPENDENT CLP PROTEASE"/>
    <property type="match status" value="1"/>
</dbReference>
<dbReference type="PANTHER" id="PTHR11638:SF18">
    <property type="entry name" value="HEAT SHOCK PROTEIN 104"/>
    <property type="match status" value="1"/>
</dbReference>
<dbReference type="Pfam" id="PF00004">
    <property type="entry name" value="AAA"/>
    <property type="match status" value="1"/>
</dbReference>
<dbReference type="Pfam" id="PF07724">
    <property type="entry name" value="AAA_2"/>
    <property type="match status" value="1"/>
</dbReference>
<dbReference type="Pfam" id="PF17871">
    <property type="entry name" value="AAA_lid_9"/>
    <property type="match status" value="1"/>
</dbReference>
<dbReference type="Pfam" id="PF02861">
    <property type="entry name" value="Clp_N"/>
    <property type="match status" value="2"/>
</dbReference>
<dbReference type="Pfam" id="PF10431">
    <property type="entry name" value="ClpB_D2-small"/>
    <property type="match status" value="1"/>
</dbReference>
<dbReference type="PRINTS" id="PR00300">
    <property type="entry name" value="CLPPROTEASEA"/>
</dbReference>
<dbReference type="SMART" id="SM00382">
    <property type="entry name" value="AAA"/>
    <property type="match status" value="2"/>
</dbReference>
<dbReference type="SMART" id="SM01086">
    <property type="entry name" value="ClpB_D2-small"/>
    <property type="match status" value="1"/>
</dbReference>
<dbReference type="SUPFAM" id="SSF81923">
    <property type="entry name" value="Double Clp-N motif"/>
    <property type="match status" value="1"/>
</dbReference>
<dbReference type="SUPFAM" id="SSF52540">
    <property type="entry name" value="P-loop containing nucleoside triphosphate hydrolases"/>
    <property type="match status" value="2"/>
</dbReference>
<dbReference type="PROSITE" id="PS51903">
    <property type="entry name" value="CLP_R"/>
    <property type="match status" value="1"/>
</dbReference>
<dbReference type="PROSITE" id="PS00870">
    <property type="entry name" value="CLPAB_1"/>
    <property type="match status" value="1"/>
</dbReference>
<dbReference type="PROSITE" id="PS00871">
    <property type="entry name" value="CLPAB_2"/>
    <property type="match status" value="1"/>
</dbReference>
<evidence type="ECO:0000250" key="1"/>
<evidence type="ECO:0000255" key="2">
    <source>
        <dbReference type="PROSITE-ProRule" id="PRU01251"/>
    </source>
</evidence>
<evidence type="ECO:0000305" key="3"/>
<accession>Q7M9X4</accession>
<reference key="1">
    <citation type="journal article" date="2003" name="Proc. Natl. Acad. Sci. U.S.A.">
        <title>Complete genome sequence and analysis of Wolinella succinogenes.</title>
        <authorList>
            <person name="Baar C."/>
            <person name="Eppinger M."/>
            <person name="Raddatz G."/>
            <person name="Simon J."/>
            <person name="Lanz C."/>
            <person name="Klimmek O."/>
            <person name="Nandakumar R."/>
            <person name="Gross R."/>
            <person name="Rosinus A."/>
            <person name="Keller H."/>
            <person name="Jagtap P."/>
            <person name="Linke B."/>
            <person name="Meyer F."/>
            <person name="Lederer H."/>
            <person name="Schuster S.C."/>
        </authorList>
    </citation>
    <scope>NUCLEOTIDE SEQUENCE [LARGE SCALE GENOMIC DNA]</scope>
    <source>
        <strain>ATCC 29543 / DSM 1740 / CCUG 13145 / JCM 31913 / LMG 7466 / NCTC 11488 / FDC 602W</strain>
    </source>
</reference>
<protein>
    <recommendedName>
        <fullName>Chaperone protein ClpB</fullName>
    </recommendedName>
</protein>
<comment type="function">
    <text evidence="1">Part of a stress-induced multi-chaperone system, it is involved in the recovery of the cell from heat-induced damage, in cooperation with DnaK, DnaJ and GrpE. Acts before DnaK, in the processing of protein aggregates. Protein binding stimulates the ATPase activity; ATP hydrolysis unfolds the denatured protein aggregates, which probably helps expose new hydrophobic binding sites on the surface of ClpB-bound aggregates, contributing to the solubilization and refolding of denatured protein aggregates by DnaK (By similarity).</text>
</comment>
<comment type="subunit">
    <text evidence="1">Homohexamer. The oligomerization is ATP-dependent (By similarity).</text>
</comment>
<comment type="subcellular location">
    <subcellularLocation>
        <location evidence="3">Cytoplasm</location>
    </subcellularLocation>
</comment>
<comment type="domain">
    <text evidence="1">The Clp repeat (R) domain probably functions as a substrate-discriminating domain, recruiting aggregated proteins to the ClpB hexamer and/or stabilizing bound proteins. The NBD2 domain is responsible for oligomerization, whereas the NBD1 domain stabilizes the hexamer probably in an ATP-dependent manner. The movement of the coiled-coil domain is essential for ClpB ability to rescue proteins from an aggregated state, probably by pulling apart large aggregated proteins, which are bound between the coiled-coils motifs of adjacent ClpB subunits in the functional hexamer (By similarity).</text>
</comment>
<comment type="similarity">
    <text evidence="3">Belongs to the ClpA/ClpB family.</text>
</comment>
<gene>
    <name type="primary">clpB</name>
    <name type="ordered locus">WS0609</name>
</gene>
<feature type="chain" id="PRO_0000191205" description="Chaperone protein ClpB">
    <location>
        <begin position="1"/>
        <end position="857"/>
    </location>
</feature>
<feature type="domain" description="Clp R" evidence="2">
    <location>
        <begin position="4"/>
        <end position="146"/>
    </location>
</feature>
<feature type="region of interest" description="Repeat 1" evidence="2">
    <location>
        <begin position="7"/>
        <end position="72"/>
    </location>
</feature>
<feature type="region of interest" description="Repeat 2" evidence="2">
    <location>
        <begin position="85"/>
        <end position="146"/>
    </location>
</feature>
<feature type="region of interest" description="NBD1" evidence="1">
    <location>
        <begin position="159"/>
        <end position="339"/>
    </location>
</feature>
<feature type="region of interest" description="Linker" evidence="1">
    <location>
        <begin position="340"/>
        <end position="548"/>
    </location>
</feature>
<feature type="region of interest" description="NBD2" evidence="1">
    <location>
        <begin position="558"/>
        <end position="765"/>
    </location>
</feature>
<feature type="region of interest" description="C-terminal" evidence="1">
    <location>
        <begin position="766"/>
        <end position="857"/>
    </location>
</feature>
<feature type="coiled-coil region" evidence="1">
    <location>
        <begin position="390"/>
        <end position="525"/>
    </location>
</feature>
<feature type="binding site" evidence="1">
    <location>
        <begin position="206"/>
        <end position="213"/>
    </location>
    <ligand>
        <name>ATP</name>
        <dbReference type="ChEBI" id="CHEBI:30616"/>
        <label>1</label>
    </ligand>
</feature>
<feature type="binding site" evidence="1">
    <location>
        <begin position="608"/>
        <end position="615"/>
    </location>
    <ligand>
        <name>ATP</name>
        <dbReference type="ChEBI" id="CHEBI:30616"/>
        <label>2</label>
    </ligand>
</feature>
<name>CLPB_WOLSU</name>